<comment type="function">
    <text evidence="1">Dual-specificity methyltransferase that catalyzes the formation of 5-methyluridine at position 54 (m5U54) in all tRNAs, and that of position 341 (m5U341) in tmRNA (transfer-mRNA).</text>
</comment>
<comment type="catalytic activity">
    <reaction evidence="1">
        <text>uridine(54) in tRNA + S-adenosyl-L-methionine = 5-methyluridine(54) in tRNA + S-adenosyl-L-homocysteine + H(+)</text>
        <dbReference type="Rhea" id="RHEA:42712"/>
        <dbReference type="Rhea" id="RHEA-COMP:10167"/>
        <dbReference type="Rhea" id="RHEA-COMP:10193"/>
        <dbReference type="ChEBI" id="CHEBI:15378"/>
        <dbReference type="ChEBI" id="CHEBI:57856"/>
        <dbReference type="ChEBI" id="CHEBI:59789"/>
        <dbReference type="ChEBI" id="CHEBI:65315"/>
        <dbReference type="ChEBI" id="CHEBI:74447"/>
        <dbReference type="EC" id="2.1.1.35"/>
    </reaction>
</comment>
<comment type="catalytic activity">
    <reaction evidence="1">
        <text>uridine(341) in tmRNA + S-adenosyl-L-methionine = 5-methyluridine(341) in tmRNA + S-adenosyl-L-homocysteine + H(+)</text>
        <dbReference type="Rhea" id="RHEA:43612"/>
        <dbReference type="Rhea" id="RHEA-COMP:10630"/>
        <dbReference type="Rhea" id="RHEA-COMP:10631"/>
        <dbReference type="ChEBI" id="CHEBI:15378"/>
        <dbReference type="ChEBI" id="CHEBI:57856"/>
        <dbReference type="ChEBI" id="CHEBI:59789"/>
        <dbReference type="ChEBI" id="CHEBI:65315"/>
        <dbReference type="ChEBI" id="CHEBI:74447"/>
    </reaction>
</comment>
<comment type="similarity">
    <text evidence="1">Belongs to the class I-like SAM-binding methyltransferase superfamily. RNA M5U methyltransferase family. TrmA subfamily.</text>
</comment>
<gene>
    <name evidence="1" type="primary">trmA</name>
    <name type="ordered locus">ECSE_4260</name>
</gene>
<name>TRMA_ECOSE</name>
<evidence type="ECO:0000255" key="1">
    <source>
        <dbReference type="HAMAP-Rule" id="MF_01011"/>
    </source>
</evidence>
<sequence>MTPEHLPTEQYEAQLAEKVVRLQSMMAPFSDLVPEVFRSPVSHYRMRAEFRIWHDGDDLYHIIFDQQTKSRIRVDSFPAASELINQLMTAMIAGVRNNPVLRHKLFQIDYLTTLSNQAVVSLLYHKKLDDEWRQEAEALRDALRAQNLNVHLIGRATKTKIELDQDYIDERLPVAGKEMIYRQVENSFTQPNAAMNIQMLEWALDVTKGSKGDLLELYCGNGNFSLALARNFDRVLATEIAKPSVAAAQYNIAANHIDNVQIIRMAAEEFTQAMNGVREFNRLQGIDLKSYQCETIFVDPPRSGLDSETEKMVQAYPRILYISCNPETLCKNLETLSQTHKVERLALFDQFPYTHHMECGVLLTAK</sequence>
<organism>
    <name type="scientific">Escherichia coli (strain SE11)</name>
    <dbReference type="NCBI Taxonomy" id="409438"/>
    <lineage>
        <taxon>Bacteria</taxon>
        <taxon>Pseudomonadati</taxon>
        <taxon>Pseudomonadota</taxon>
        <taxon>Gammaproteobacteria</taxon>
        <taxon>Enterobacterales</taxon>
        <taxon>Enterobacteriaceae</taxon>
        <taxon>Escherichia</taxon>
    </lineage>
</organism>
<protein>
    <recommendedName>
        <fullName evidence="1">tRNA/tmRNA (uracil-C(5))-methyltransferase</fullName>
        <ecNumber evidence="1">2.1.1.-</ecNumber>
        <ecNumber evidence="1">2.1.1.35</ecNumber>
    </recommendedName>
    <alternativeName>
        <fullName evidence="1">tRNA (uracil(54)-C(5))-methyltransferase</fullName>
    </alternativeName>
    <alternativeName>
        <fullName evidence="1">tRNA(m5U54)-methyltransferase</fullName>
        <shortName evidence="1">RUMT</shortName>
    </alternativeName>
    <alternativeName>
        <fullName evidence="1">tmRNA (uracil(341)-C(5))-methyltransferase</fullName>
    </alternativeName>
</protein>
<keyword id="KW-0489">Methyltransferase</keyword>
<keyword id="KW-0949">S-adenosyl-L-methionine</keyword>
<keyword id="KW-0808">Transferase</keyword>
<keyword id="KW-0819">tRNA processing</keyword>
<reference key="1">
    <citation type="journal article" date="2008" name="DNA Res.">
        <title>Complete genome sequence and comparative analysis of the wild-type commensal Escherichia coli strain SE11 isolated from a healthy adult.</title>
        <authorList>
            <person name="Oshima K."/>
            <person name="Toh H."/>
            <person name="Ogura Y."/>
            <person name="Sasamoto H."/>
            <person name="Morita H."/>
            <person name="Park S.-H."/>
            <person name="Ooka T."/>
            <person name="Iyoda S."/>
            <person name="Taylor T.D."/>
            <person name="Hayashi T."/>
            <person name="Itoh K."/>
            <person name="Hattori M."/>
        </authorList>
    </citation>
    <scope>NUCLEOTIDE SEQUENCE [LARGE SCALE GENOMIC DNA]</scope>
    <source>
        <strain>SE11</strain>
    </source>
</reference>
<feature type="chain" id="PRO_1000198539" description="tRNA/tmRNA (uracil-C(5))-methyltransferase">
    <location>
        <begin position="1"/>
        <end position="366"/>
    </location>
</feature>
<feature type="active site" description="Nucleophile" evidence="1">
    <location>
        <position position="324"/>
    </location>
</feature>
<feature type="active site" description="Proton acceptor" evidence="1">
    <location>
        <position position="358"/>
    </location>
</feature>
<feature type="binding site" evidence="1">
    <location>
        <position position="190"/>
    </location>
    <ligand>
        <name>S-adenosyl-L-methionine</name>
        <dbReference type="ChEBI" id="CHEBI:59789"/>
    </ligand>
</feature>
<feature type="binding site" evidence="1">
    <location>
        <position position="218"/>
    </location>
    <ligand>
        <name>S-adenosyl-L-methionine</name>
        <dbReference type="ChEBI" id="CHEBI:59789"/>
    </ligand>
</feature>
<feature type="binding site" evidence="1">
    <location>
        <position position="223"/>
    </location>
    <ligand>
        <name>S-adenosyl-L-methionine</name>
        <dbReference type="ChEBI" id="CHEBI:59789"/>
    </ligand>
</feature>
<feature type="binding site" evidence="1">
    <location>
        <position position="239"/>
    </location>
    <ligand>
        <name>S-adenosyl-L-methionine</name>
        <dbReference type="ChEBI" id="CHEBI:59789"/>
    </ligand>
</feature>
<feature type="binding site" evidence="1">
    <location>
        <position position="299"/>
    </location>
    <ligand>
        <name>S-adenosyl-L-methionine</name>
        <dbReference type="ChEBI" id="CHEBI:59789"/>
    </ligand>
</feature>
<dbReference type="EC" id="2.1.1.-" evidence="1"/>
<dbReference type="EC" id="2.1.1.35" evidence="1"/>
<dbReference type="EMBL" id="AP009240">
    <property type="protein sequence ID" value="BAG79784.1"/>
    <property type="molecule type" value="Genomic_DNA"/>
</dbReference>
<dbReference type="RefSeq" id="WP_000187022.1">
    <property type="nucleotide sequence ID" value="NC_011415.1"/>
</dbReference>
<dbReference type="SMR" id="B6I5I3"/>
<dbReference type="GeneID" id="75203203"/>
<dbReference type="KEGG" id="ecy:ECSE_4260"/>
<dbReference type="HOGENOM" id="CLU_043022_0_0_6"/>
<dbReference type="Proteomes" id="UP000008199">
    <property type="component" value="Chromosome"/>
</dbReference>
<dbReference type="GO" id="GO:0005829">
    <property type="term" value="C:cytosol"/>
    <property type="evidence" value="ECO:0007669"/>
    <property type="project" value="TreeGrafter"/>
</dbReference>
<dbReference type="GO" id="GO:0019843">
    <property type="term" value="F:rRNA binding"/>
    <property type="evidence" value="ECO:0007669"/>
    <property type="project" value="TreeGrafter"/>
</dbReference>
<dbReference type="GO" id="GO:0030697">
    <property type="term" value="F:tRNA (uracil(54)-C5)-methyltransferase activity, S-adenosyl methionine-dependent"/>
    <property type="evidence" value="ECO:0007669"/>
    <property type="project" value="UniProtKB-UniRule"/>
</dbReference>
<dbReference type="GO" id="GO:0000049">
    <property type="term" value="F:tRNA binding"/>
    <property type="evidence" value="ECO:0007669"/>
    <property type="project" value="TreeGrafter"/>
</dbReference>
<dbReference type="GO" id="GO:0030488">
    <property type="term" value="P:tRNA methylation"/>
    <property type="evidence" value="ECO:0007669"/>
    <property type="project" value="UniProtKB-UniRule"/>
</dbReference>
<dbReference type="CDD" id="cd02440">
    <property type="entry name" value="AdoMet_MTases"/>
    <property type="match status" value="1"/>
</dbReference>
<dbReference type="FunFam" id="2.40.50.1070:FF:000001">
    <property type="entry name" value="tRNA/tmRNA (uracil-C(5))-methyltransferase"/>
    <property type="match status" value="1"/>
</dbReference>
<dbReference type="FunFam" id="3.40.50.150:FF:000012">
    <property type="entry name" value="tRNA/tmRNA (uracil-C(5))-methyltransferase"/>
    <property type="match status" value="1"/>
</dbReference>
<dbReference type="Gene3D" id="2.40.50.1070">
    <property type="match status" value="1"/>
</dbReference>
<dbReference type="Gene3D" id="3.40.50.150">
    <property type="entry name" value="Vaccinia Virus protein VP39"/>
    <property type="match status" value="1"/>
</dbReference>
<dbReference type="HAMAP" id="MF_01011">
    <property type="entry name" value="RNA_methyltr_TrmA"/>
    <property type="match status" value="1"/>
</dbReference>
<dbReference type="InterPro" id="IPR030390">
    <property type="entry name" value="MeTrfase_TrmA_AS"/>
</dbReference>
<dbReference type="InterPro" id="IPR030391">
    <property type="entry name" value="MeTrfase_TrmA_CS"/>
</dbReference>
<dbReference type="InterPro" id="IPR029063">
    <property type="entry name" value="SAM-dependent_MTases_sf"/>
</dbReference>
<dbReference type="InterPro" id="IPR011869">
    <property type="entry name" value="TrmA_MeTrfase"/>
</dbReference>
<dbReference type="InterPro" id="IPR010280">
    <property type="entry name" value="U5_MeTrfase_fam"/>
</dbReference>
<dbReference type="NCBIfam" id="TIGR02143">
    <property type="entry name" value="trmA_only"/>
    <property type="match status" value="1"/>
</dbReference>
<dbReference type="PANTHER" id="PTHR47790">
    <property type="entry name" value="TRNA/TMRNA (URACIL-C(5))-METHYLTRANSFERASE"/>
    <property type="match status" value="1"/>
</dbReference>
<dbReference type="PANTHER" id="PTHR47790:SF2">
    <property type="entry name" value="TRNA_TMRNA (URACIL-C(5))-METHYLTRANSFERASE"/>
    <property type="match status" value="1"/>
</dbReference>
<dbReference type="Pfam" id="PF05958">
    <property type="entry name" value="tRNA_U5-meth_tr"/>
    <property type="match status" value="1"/>
</dbReference>
<dbReference type="SUPFAM" id="SSF53335">
    <property type="entry name" value="S-adenosyl-L-methionine-dependent methyltransferases"/>
    <property type="match status" value="1"/>
</dbReference>
<dbReference type="PROSITE" id="PS51687">
    <property type="entry name" value="SAM_MT_RNA_M5U"/>
    <property type="match status" value="1"/>
</dbReference>
<dbReference type="PROSITE" id="PS01230">
    <property type="entry name" value="TRMA_1"/>
    <property type="match status" value="1"/>
</dbReference>
<dbReference type="PROSITE" id="PS01231">
    <property type="entry name" value="TRMA_2"/>
    <property type="match status" value="1"/>
</dbReference>
<proteinExistence type="inferred from homology"/>
<accession>B6I5I3</accession>